<keyword id="KW-0131">Cell cycle</keyword>
<keyword id="KW-0132">Cell division</keyword>
<keyword id="KW-0175">Coiled coil</keyword>
<keyword id="KW-0963">Cytoplasm</keyword>
<keyword id="KW-1185">Reference proteome</keyword>
<keyword id="KW-0717">Septation</keyword>
<sequence length="80" mass="9421">MSFEVLEKLEAKIQTAVDTIALLQMEVEELKEEKQQLQNEAQELREAREALEQRAQQVQQEHAAWQERIRSLLGKMEDVE</sequence>
<accession>Q9KNP5</accession>
<dbReference type="EMBL" id="AE003852">
    <property type="protein sequence ID" value="AAF95827.1"/>
    <property type="molecule type" value="Genomic_DNA"/>
</dbReference>
<dbReference type="PIR" id="D82045">
    <property type="entry name" value="D82045"/>
</dbReference>
<dbReference type="RefSeq" id="NP_232314.1">
    <property type="nucleotide sequence ID" value="NC_002505.1"/>
</dbReference>
<dbReference type="RefSeq" id="WP_000007388.1">
    <property type="nucleotide sequence ID" value="NZ_LT906614.1"/>
</dbReference>
<dbReference type="SMR" id="Q9KNP5"/>
<dbReference type="STRING" id="243277.VC_2686"/>
<dbReference type="DNASU" id="2615514"/>
<dbReference type="EnsemblBacteria" id="AAF95827">
    <property type="protein sequence ID" value="AAF95827"/>
    <property type="gene ID" value="VC_2686"/>
</dbReference>
<dbReference type="GeneID" id="94012668"/>
<dbReference type="KEGG" id="vch:VC_2686"/>
<dbReference type="PATRIC" id="fig|243277.26.peg.2562"/>
<dbReference type="eggNOG" id="COG3074">
    <property type="taxonomic scope" value="Bacteria"/>
</dbReference>
<dbReference type="HOGENOM" id="CLU_171174_2_0_6"/>
<dbReference type="Proteomes" id="UP000000584">
    <property type="component" value="Chromosome 1"/>
</dbReference>
<dbReference type="GO" id="GO:0005737">
    <property type="term" value="C:cytoplasm"/>
    <property type="evidence" value="ECO:0007669"/>
    <property type="project" value="UniProtKB-SubCell"/>
</dbReference>
<dbReference type="GO" id="GO:0000917">
    <property type="term" value="P:division septum assembly"/>
    <property type="evidence" value="ECO:0007669"/>
    <property type="project" value="UniProtKB-KW"/>
</dbReference>
<dbReference type="GO" id="GO:0043093">
    <property type="term" value="P:FtsZ-dependent cytokinesis"/>
    <property type="evidence" value="ECO:0007669"/>
    <property type="project" value="UniProtKB-UniRule"/>
</dbReference>
<dbReference type="Gene3D" id="1.20.5.340">
    <property type="match status" value="1"/>
</dbReference>
<dbReference type="HAMAP" id="MF_01196">
    <property type="entry name" value="ZapB"/>
    <property type="match status" value="1"/>
</dbReference>
<dbReference type="InterPro" id="IPR009252">
    <property type="entry name" value="Cell_div_ZapB"/>
</dbReference>
<dbReference type="Pfam" id="PF06005">
    <property type="entry name" value="ZapB"/>
    <property type="match status" value="1"/>
</dbReference>
<name>ZAPB_VIBCH</name>
<evidence type="ECO:0000255" key="1">
    <source>
        <dbReference type="HAMAP-Rule" id="MF_01196"/>
    </source>
</evidence>
<protein>
    <recommendedName>
        <fullName evidence="1">Cell division protein ZapB</fullName>
    </recommendedName>
</protein>
<organism>
    <name type="scientific">Vibrio cholerae serotype O1 (strain ATCC 39315 / El Tor Inaba N16961)</name>
    <dbReference type="NCBI Taxonomy" id="243277"/>
    <lineage>
        <taxon>Bacteria</taxon>
        <taxon>Pseudomonadati</taxon>
        <taxon>Pseudomonadota</taxon>
        <taxon>Gammaproteobacteria</taxon>
        <taxon>Vibrionales</taxon>
        <taxon>Vibrionaceae</taxon>
        <taxon>Vibrio</taxon>
    </lineage>
</organism>
<gene>
    <name evidence="1" type="primary">zapB</name>
    <name type="ordered locus">VC_2686</name>
</gene>
<feature type="chain" id="PRO_0000333938" description="Cell division protein ZapB">
    <location>
        <begin position="1"/>
        <end position="80"/>
    </location>
</feature>
<feature type="coiled-coil region" evidence="1">
    <location>
        <begin position="3"/>
        <end position="80"/>
    </location>
</feature>
<comment type="function">
    <text evidence="1">Non-essential, abundant cell division factor that is required for proper Z-ring formation. It is recruited early to the divisome by direct interaction with FtsZ, stimulating Z-ring assembly and thereby promoting cell division earlier in the cell cycle. Its recruitment to the Z-ring requires functional FtsA or ZipA.</text>
</comment>
<comment type="subunit">
    <text evidence="1">Homodimer. The ends of the coiled-coil dimer bind to each other, forming polymers. Interacts with FtsZ.</text>
</comment>
<comment type="subcellular location">
    <subcellularLocation>
        <location>Cytoplasm</location>
    </subcellularLocation>
    <text evidence="1">Localizes to the septum at mid-cell, in a FtsZ-like pattern.</text>
</comment>
<comment type="similarity">
    <text evidence="1">Belongs to the ZapB family.</text>
</comment>
<proteinExistence type="inferred from homology"/>
<reference key="1">
    <citation type="journal article" date="2000" name="Nature">
        <title>DNA sequence of both chromosomes of the cholera pathogen Vibrio cholerae.</title>
        <authorList>
            <person name="Heidelberg J.F."/>
            <person name="Eisen J.A."/>
            <person name="Nelson W.C."/>
            <person name="Clayton R.A."/>
            <person name="Gwinn M.L."/>
            <person name="Dodson R.J."/>
            <person name="Haft D.H."/>
            <person name="Hickey E.K."/>
            <person name="Peterson J.D."/>
            <person name="Umayam L.A."/>
            <person name="Gill S.R."/>
            <person name="Nelson K.E."/>
            <person name="Read T.D."/>
            <person name="Tettelin H."/>
            <person name="Richardson D.L."/>
            <person name="Ermolaeva M.D."/>
            <person name="Vamathevan J.J."/>
            <person name="Bass S."/>
            <person name="Qin H."/>
            <person name="Dragoi I."/>
            <person name="Sellers P."/>
            <person name="McDonald L.A."/>
            <person name="Utterback T.R."/>
            <person name="Fleischmann R.D."/>
            <person name="Nierman W.C."/>
            <person name="White O."/>
            <person name="Salzberg S.L."/>
            <person name="Smith H.O."/>
            <person name="Colwell R.R."/>
            <person name="Mekalanos J.J."/>
            <person name="Venter J.C."/>
            <person name="Fraser C.M."/>
        </authorList>
    </citation>
    <scope>NUCLEOTIDE SEQUENCE [LARGE SCALE GENOMIC DNA]</scope>
    <source>
        <strain>ATCC 39315 / El Tor Inaba N16961</strain>
    </source>
</reference>